<sequence length="353" mass="37962">MAIDENKQKALAAAMGQIEKQFGKGSIMRLGEDRSMDVETISTGSLSLDIALGAGGLPMGRIVEIYGPESSGKTTLTLQVIAAAQREGKTCAFIDAEHALDPVYARKLGVDIDNLLCSQPDTGEQALEICDALARSGAVDVIVVDSVAALTPKAEIEGEIGDSHMGLAARMMSQAMRKLAGNLKQSNTLLIFINQIRMKIGVMFGNPETTTGGNALKFYASVRLDIRRIGAVKEGDNVVGSETRVKVVKNKIAAPFKQAEFQILYGEGINFYGELVDLGVKEKLIEKAGAWYSYNGEKIGQGKANATTWLKENPATAKEIEKRVRELLLSNQNATPDFAVDDSEGVAETNEDF</sequence>
<feature type="chain" id="PRO_1000114366" description="Protein RecA">
    <location>
        <begin position="1"/>
        <end position="353"/>
    </location>
</feature>
<feature type="binding site" evidence="1">
    <location>
        <begin position="67"/>
        <end position="74"/>
    </location>
    <ligand>
        <name>ATP</name>
        <dbReference type="ChEBI" id="CHEBI:30616"/>
    </ligand>
</feature>
<organism>
    <name type="scientific">Salmonella paratyphi A (strain AKU_12601)</name>
    <dbReference type="NCBI Taxonomy" id="554290"/>
    <lineage>
        <taxon>Bacteria</taxon>
        <taxon>Pseudomonadati</taxon>
        <taxon>Pseudomonadota</taxon>
        <taxon>Gammaproteobacteria</taxon>
        <taxon>Enterobacterales</taxon>
        <taxon>Enterobacteriaceae</taxon>
        <taxon>Salmonella</taxon>
    </lineage>
</organism>
<evidence type="ECO:0000255" key="1">
    <source>
        <dbReference type="HAMAP-Rule" id="MF_00268"/>
    </source>
</evidence>
<comment type="function">
    <text evidence="1">Can catalyze the hydrolysis of ATP in the presence of single-stranded DNA, the ATP-dependent uptake of single-stranded DNA by duplex DNA, and the ATP-dependent hybridization of homologous single-stranded DNAs. It interacts with LexA causing its activation and leading to its autocatalytic cleavage.</text>
</comment>
<comment type="subcellular location">
    <subcellularLocation>
        <location evidence="1">Cytoplasm</location>
    </subcellularLocation>
</comment>
<comment type="similarity">
    <text evidence="1">Belongs to the RecA family.</text>
</comment>
<gene>
    <name evidence="1" type="primary">recA</name>
    <name type="ordered locus">SSPA2501</name>
</gene>
<dbReference type="EMBL" id="FM200053">
    <property type="protein sequence ID" value="CAR60737.1"/>
    <property type="molecule type" value="Genomic_DNA"/>
</dbReference>
<dbReference type="RefSeq" id="WP_000963154.1">
    <property type="nucleotide sequence ID" value="NC_011147.1"/>
</dbReference>
<dbReference type="SMR" id="B5BEN7"/>
<dbReference type="KEGG" id="sek:SSPA2501"/>
<dbReference type="HOGENOM" id="CLU_040469_3_2_6"/>
<dbReference type="Proteomes" id="UP000001869">
    <property type="component" value="Chromosome"/>
</dbReference>
<dbReference type="GO" id="GO:0005829">
    <property type="term" value="C:cytosol"/>
    <property type="evidence" value="ECO:0007669"/>
    <property type="project" value="TreeGrafter"/>
</dbReference>
<dbReference type="GO" id="GO:0005524">
    <property type="term" value="F:ATP binding"/>
    <property type="evidence" value="ECO:0007669"/>
    <property type="project" value="UniProtKB-UniRule"/>
</dbReference>
<dbReference type="GO" id="GO:0016887">
    <property type="term" value="F:ATP hydrolysis activity"/>
    <property type="evidence" value="ECO:0007669"/>
    <property type="project" value="InterPro"/>
</dbReference>
<dbReference type="GO" id="GO:0140664">
    <property type="term" value="F:ATP-dependent DNA damage sensor activity"/>
    <property type="evidence" value="ECO:0007669"/>
    <property type="project" value="InterPro"/>
</dbReference>
<dbReference type="GO" id="GO:0003684">
    <property type="term" value="F:damaged DNA binding"/>
    <property type="evidence" value="ECO:0007669"/>
    <property type="project" value="UniProtKB-UniRule"/>
</dbReference>
<dbReference type="GO" id="GO:0003697">
    <property type="term" value="F:single-stranded DNA binding"/>
    <property type="evidence" value="ECO:0007669"/>
    <property type="project" value="UniProtKB-UniRule"/>
</dbReference>
<dbReference type="GO" id="GO:0006310">
    <property type="term" value="P:DNA recombination"/>
    <property type="evidence" value="ECO:0007669"/>
    <property type="project" value="UniProtKB-UniRule"/>
</dbReference>
<dbReference type="GO" id="GO:0006281">
    <property type="term" value="P:DNA repair"/>
    <property type="evidence" value="ECO:0007669"/>
    <property type="project" value="UniProtKB-UniRule"/>
</dbReference>
<dbReference type="GO" id="GO:0009432">
    <property type="term" value="P:SOS response"/>
    <property type="evidence" value="ECO:0007669"/>
    <property type="project" value="UniProtKB-UniRule"/>
</dbReference>
<dbReference type="CDD" id="cd00983">
    <property type="entry name" value="RecA"/>
    <property type="match status" value="1"/>
</dbReference>
<dbReference type="FunFam" id="3.40.50.300:FF:000087">
    <property type="entry name" value="Recombinase RecA"/>
    <property type="match status" value="1"/>
</dbReference>
<dbReference type="Gene3D" id="3.40.50.300">
    <property type="entry name" value="P-loop containing nucleotide triphosphate hydrolases"/>
    <property type="match status" value="1"/>
</dbReference>
<dbReference type="HAMAP" id="MF_00268">
    <property type="entry name" value="RecA"/>
    <property type="match status" value="1"/>
</dbReference>
<dbReference type="InterPro" id="IPR003593">
    <property type="entry name" value="AAA+_ATPase"/>
</dbReference>
<dbReference type="InterPro" id="IPR013765">
    <property type="entry name" value="DNA_recomb/repair_RecA"/>
</dbReference>
<dbReference type="InterPro" id="IPR020584">
    <property type="entry name" value="DNA_recomb/repair_RecA_CS"/>
</dbReference>
<dbReference type="InterPro" id="IPR027417">
    <property type="entry name" value="P-loop_NTPase"/>
</dbReference>
<dbReference type="InterPro" id="IPR049261">
    <property type="entry name" value="RecA-like_C"/>
</dbReference>
<dbReference type="InterPro" id="IPR049428">
    <property type="entry name" value="RecA-like_N"/>
</dbReference>
<dbReference type="InterPro" id="IPR020588">
    <property type="entry name" value="RecA_ATP-bd"/>
</dbReference>
<dbReference type="InterPro" id="IPR023400">
    <property type="entry name" value="RecA_C_sf"/>
</dbReference>
<dbReference type="InterPro" id="IPR020587">
    <property type="entry name" value="RecA_monomer-monomer_interface"/>
</dbReference>
<dbReference type="NCBIfam" id="TIGR02012">
    <property type="entry name" value="tigrfam_recA"/>
    <property type="match status" value="1"/>
</dbReference>
<dbReference type="PANTHER" id="PTHR45900:SF1">
    <property type="entry name" value="MITOCHONDRIAL DNA REPAIR PROTEIN RECA HOMOLOG-RELATED"/>
    <property type="match status" value="1"/>
</dbReference>
<dbReference type="PANTHER" id="PTHR45900">
    <property type="entry name" value="RECA"/>
    <property type="match status" value="1"/>
</dbReference>
<dbReference type="Pfam" id="PF00154">
    <property type="entry name" value="RecA"/>
    <property type="match status" value="1"/>
</dbReference>
<dbReference type="Pfam" id="PF21096">
    <property type="entry name" value="RecA_C"/>
    <property type="match status" value="1"/>
</dbReference>
<dbReference type="PRINTS" id="PR00142">
    <property type="entry name" value="RECA"/>
</dbReference>
<dbReference type="SMART" id="SM00382">
    <property type="entry name" value="AAA"/>
    <property type="match status" value="1"/>
</dbReference>
<dbReference type="SUPFAM" id="SSF52540">
    <property type="entry name" value="P-loop containing nucleoside triphosphate hydrolases"/>
    <property type="match status" value="1"/>
</dbReference>
<dbReference type="SUPFAM" id="SSF54752">
    <property type="entry name" value="RecA protein, C-terminal domain"/>
    <property type="match status" value="1"/>
</dbReference>
<dbReference type="PROSITE" id="PS00321">
    <property type="entry name" value="RECA_1"/>
    <property type="match status" value="1"/>
</dbReference>
<dbReference type="PROSITE" id="PS50162">
    <property type="entry name" value="RECA_2"/>
    <property type="match status" value="1"/>
</dbReference>
<dbReference type="PROSITE" id="PS50163">
    <property type="entry name" value="RECA_3"/>
    <property type="match status" value="1"/>
</dbReference>
<proteinExistence type="inferred from homology"/>
<name>RECA_SALPK</name>
<protein>
    <recommendedName>
        <fullName evidence="1">Protein RecA</fullName>
    </recommendedName>
    <alternativeName>
        <fullName evidence="1">Recombinase A</fullName>
    </alternativeName>
</protein>
<keyword id="KW-0067">ATP-binding</keyword>
<keyword id="KW-0963">Cytoplasm</keyword>
<keyword id="KW-0227">DNA damage</keyword>
<keyword id="KW-0233">DNA recombination</keyword>
<keyword id="KW-0234">DNA repair</keyword>
<keyword id="KW-0238">DNA-binding</keyword>
<keyword id="KW-0547">Nucleotide-binding</keyword>
<keyword id="KW-0742">SOS response</keyword>
<accession>B5BEN7</accession>
<reference key="1">
    <citation type="journal article" date="2009" name="BMC Genomics">
        <title>Pseudogene accumulation in the evolutionary histories of Salmonella enterica serovars Paratyphi A and Typhi.</title>
        <authorList>
            <person name="Holt K.E."/>
            <person name="Thomson N.R."/>
            <person name="Wain J."/>
            <person name="Langridge G.C."/>
            <person name="Hasan R."/>
            <person name="Bhutta Z.A."/>
            <person name="Quail M.A."/>
            <person name="Norbertczak H."/>
            <person name="Walker D."/>
            <person name="Simmonds M."/>
            <person name="White B."/>
            <person name="Bason N."/>
            <person name="Mungall K."/>
            <person name="Dougan G."/>
            <person name="Parkhill J."/>
        </authorList>
    </citation>
    <scope>NUCLEOTIDE SEQUENCE [LARGE SCALE GENOMIC DNA]</scope>
    <source>
        <strain>AKU_12601</strain>
    </source>
</reference>